<reference key="1">
    <citation type="journal article" date="2008" name="Genome Res.">
        <title>Comparative genome analysis of Salmonella enteritidis PT4 and Salmonella gallinarum 287/91 provides insights into evolutionary and host adaptation pathways.</title>
        <authorList>
            <person name="Thomson N.R."/>
            <person name="Clayton D.J."/>
            <person name="Windhorst D."/>
            <person name="Vernikos G."/>
            <person name="Davidson S."/>
            <person name="Churcher C."/>
            <person name="Quail M.A."/>
            <person name="Stevens M."/>
            <person name="Jones M.A."/>
            <person name="Watson M."/>
            <person name="Barron A."/>
            <person name="Layton A."/>
            <person name="Pickard D."/>
            <person name="Kingsley R.A."/>
            <person name="Bignell A."/>
            <person name="Clark L."/>
            <person name="Harris B."/>
            <person name="Ormond D."/>
            <person name="Abdellah Z."/>
            <person name="Brooks K."/>
            <person name="Cherevach I."/>
            <person name="Chillingworth T."/>
            <person name="Woodward J."/>
            <person name="Norberczak H."/>
            <person name="Lord A."/>
            <person name="Arrowsmith C."/>
            <person name="Jagels K."/>
            <person name="Moule S."/>
            <person name="Mungall K."/>
            <person name="Saunders M."/>
            <person name="Whitehead S."/>
            <person name="Chabalgoity J.A."/>
            <person name="Maskell D."/>
            <person name="Humphreys T."/>
            <person name="Roberts M."/>
            <person name="Barrow P.A."/>
            <person name="Dougan G."/>
            <person name="Parkhill J."/>
        </authorList>
    </citation>
    <scope>NUCLEOTIDE SEQUENCE [LARGE SCALE GENOMIC DNA]</scope>
    <source>
        <strain>P125109</strain>
    </source>
</reference>
<evidence type="ECO:0000255" key="1">
    <source>
        <dbReference type="HAMAP-Rule" id="MF_00658"/>
    </source>
</evidence>
<proteinExistence type="inferred from homology"/>
<gene>
    <name evidence="1" type="primary">rlmH</name>
    <name type="ordered locus">SEN0610</name>
</gene>
<organism>
    <name type="scientific">Salmonella enteritidis PT4 (strain P125109)</name>
    <dbReference type="NCBI Taxonomy" id="550537"/>
    <lineage>
        <taxon>Bacteria</taxon>
        <taxon>Pseudomonadati</taxon>
        <taxon>Pseudomonadota</taxon>
        <taxon>Gammaproteobacteria</taxon>
        <taxon>Enterobacterales</taxon>
        <taxon>Enterobacteriaceae</taxon>
        <taxon>Salmonella</taxon>
    </lineage>
</organism>
<name>RLMH_SALEP</name>
<sequence length="155" mass="17399">MKLQLVAVGTKMPDWVQTGFTEYLRRFPKDMPFELIEIPAGKRGKNADIKRILDKEGEQMLAAAGKNRIVTLDIPGKPWDTPQLANELERWKQDGRDVSLLIGGPEGLSPACKAAAEQSWSLSALTLPHPLVRVLVAESLYRAWSITTNHPYHRE</sequence>
<dbReference type="EC" id="2.1.1.177" evidence="1"/>
<dbReference type="EMBL" id="AM933172">
    <property type="protein sequence ID" value="CAR32198.1"/>
    <property type="molecule type" value="Genomic_DNA"/>
</dbReference>
<dbReference type="RefSeq" id="WP_000776107.1">
    <property type="nucleotide sequence ID" value="NC_011294.1"/>
</dbReference>
<dbReference type="SMR" id="B5QVP2"/>
<dbReference type="GeneID" id="66755108"/>
<dbReference type="KEGG" id="set:SEN0610"/>
<dbReference type="HOGENOM" id="CLU_100552_1_0_6"/>
<dbReference type="Proteomes" id="UP000000613">
    <property type="component" value="Chromosome"/>
</dbReference>
<dbReference type="GO" id="GO:0005737">
    <property type="term" value="C:cytoplasm"/>
    <property type="evidence" value="ECO:0007669"/>
    <property type="project" value="UniProtKB-SubCell"/>
</dbReference>
<dbReference type="GO" id="GO:0070038">
    <property type="term" value="F:rRNA (pseudouridine-N3-)-methyltransferase activity"/>
    <property type="evidence" value="ECO:0007669"/>
    <property type="project" value="UniProtKB-UniRule"/>
</dbReference>
<dbReference type="CDD" id="cd18081">
    <property type="entry name" value="RlmH-like"/>
    <property type="match status" value="1"/>
</dbReference>
<dbReference type="FunFam" id="3.40.1280.10:FF:000004">
    <property type="entry name" value="Ribosomal RNA large subunit methyltransferase H"/>
    <property type="match status" value="1"/>
</dbReference>
<dbReference type="Gene3D" id="3.40.1280.10">
    <property type="match status" value="1"/>
</dbReference>
<dbReference type="HAMAP" id="MF_00658">
    <property type="entry name" value="23SrRNA_methyltr_H"/>
    <property type="match status" value="1"/>
</dbReference>
<dbReference type="InterPro" id="IPR029028">
    <property type="entry name" value="Alpha/beta_knot_MTases"/>
</dbReference>
<dbReference type="InterPro" id="IPR003742">
    <property type="entry name" value="RlmH-like"/>
</dbReference>
<dbReference type="InterPro" id="IPR029026">
    <property type="entry name" value="tRNA_m1G_MTases_N"/>
</dbReference>
<dbReference type="NCBIfam" id="NF000984">
    <property type="entry name" value="PRK00103.1-1"/>
    <property type="match status" value="1"/>
</dbReference>
<dbReference type="NCBIfam" id="NF000986">
    <property type="entry name" value="PRK00103.1-4"/>
    <property type="match status" value="1"/>
</dbReference>
<dbReference type="NCBIfam" id="TIGR00246">
    <property type="entry name" value="tRNA_RlmH_YbeA"/>
    <property type="match status" value="1"/>
</dbReference>
<dbReference type="PANTHER" id="PTHR33603">
    <property type="entry name" value="METHYLTRANSFERASE"/>
    <property type="match status" value="1"/>
</dbReference>
<dbReference type="PANTHER" id="PTHR33603:SF1">
    <property type="entry name" value="RIBOSOMAL RNA LARGE SUBUNIT METHYLTRANSFERASE H"/>
    <property type="match status" value="1"/>
</dbReference>
<dbReference type="Pfam" id="PF02590">
    <property type="entry name" value="SPOUT_MTase"/>
    <property type="match status" value="1"/>
</dbReference>
<dbReference type="PIRSF" id="PIRSF004505">
    <property type="entry name" value="MT_bac"/>
    <property type="match status" value="1"/>
</dbReference>
<dbReference type="SUPFAM" id="SSF75217">
    <property type="entry name" value="alpha/beta knot"/>
    <property type="match status" value="1"/>
</dbReference>
<protein>
    <recommendedName>
        <fullName evidence="1">Ribosomal RNA large subunit methyltransferase H</fullName>
        <ecNumber evidence="1">2.1.1.177</ecNumber>
    </recommendedName>
    <alternativeName>
        <fullName evidence="1">23S rRNA (pseudouridine1915-N3)-methyltransferase</fullName>
    </alternativeName>
    <alternativeName>
        <fullName evidence="1">23S rRNA m3Psi1915 methyltransferase</fullName>
    </alternativeName>
    <alternativeName>
        <fullName evidence="1">rRNA (pseudouridine-N3-)-methyltransferase RlmH</fullName>
    </alternativeName>
</protein>
<keyword id="KW-0963">Cytoplasm</keyword>
<keyword id="KW-0489">Methyltransferase</keyword>
<keyword id="KW-0698">rRNA processing</keyword>
<keyword id="KW-0949">S-adenosyl-L-methionine</keyword>
<keyword id="KW-0808">Transferase</keyword>
<comment type="function">
    <text evidence="1">Specifically methylates the pseudouridine at position 1915 (m3Psi1915) in 23S rRNA.</text>
</comment>
<comment type="catalytic activity">
    <reaction evidence="1">
        <text>pseudouridine(1915) in 23S rRNA + S-adenosyl-L-methionine = N(3)-methylpseudouridine(1915) in 23S rRNA + S-adenosyl-L-homocysteine + H(+)</text>
        <dbReference type="Rhea" id="RHEA:42752"/>
        <dbReference type="Rhea" id="RHEA-COMP:10221"/>
        <dbReference type="Rhea" id="RHEA-COMP:10222"/>
        <dbReference type="ChEBI" id="CHEBI:15378"/>
        <dbReference type="ChEBI" id="CHEBI:57856"/>
        <dbReference type="ChEBI" id="CHEBI:59789"/>
        <dbReference type="ChEBI" id="CHEBI:65314"/>
        <dbReference type="ChEBI" id="CHEBI:74486"/>
        <dbReference type="EC" id="2.1.1.177"/>
    </reaction>
</comment>
<comment type="subunit">
    <text evidence="1">Homodimer.</text>
</comment>
<comment type="subcellular location">
    <subcellularLocation>
        <location evidence="1">Cytoplasm</location>
    </subcellularLocation>
</comment>
<comment type="similarity">
    <text evidence="1">Belongs to the RNA methyltransferase RlmH family.</text>
</comment>
<accession>B5QVP2</accession>
<feature type="chain" id="PRO_0000366650" description="Ribosomal RNA large subunit methyltransferase H">
    <location>
        <begin position="1"/>
        <end position="155"/>
    </location>
</feature>
<feature type="binding site" evidence="1">
    <location>
        <position position="72"/>
    </location>
    <ligand>
        <name>S-adenosyl-L-methionine</name>
        <dbReference type="ChEBI" id="CHEBI:59789"/>
    </ligand>
</feature>
<feature type="binding site" evidence="1">
    <location>
        <position position="103"/>
    </location>
    <ligand>
        <name>S-adenosyl-L-methionine</name>
        <dbReference type="ChEBI" id="CHEBI:59789"/>
    </ligand>
</feature>
<feature type="binding site" evidence="1">
    <location>
        <begin position="122"/>
        <end position="127"/>
    </location>
    <ligand>
        <name>S-adenosyl-L-methionine</name>
        <dbReference type="ChEBI" id="CHEBI:59789"/>
    </ligand>
</feature>